<comment type="function">
    <text evidence="1">Regulator of biological processes that recruits a histone deacetylase to control gene transcription. May play a role in the entry into mitosis, negatively regulating the cell proliferation. Formation of stable complexes with geminiviridae replication-associated proteins may create a cellular environment which favors viral DNA replication (By similarity).</text>
</comment>
<comment type="subcellular location">
    <subcellularLocation>
        <location evidence="1">Nucleus</location>
    </subcellularLocation>
</comment>
<comment type="similarity">
    <text evidence="3">Belongs to the retinoblastoma protein (RB) family.</text>
</comment>
<dbReference type="EMBL" id="AB247284">
    <property type="protein sequence ID" value="BAE80326.1"/>
    <property type="molecule type" value="mRNA"/>
</dbReference>
<dbReference type="SMR" id="Q2ABE5"/>
<dbReference type="GO" id="GO:0000785">
    <property type="term" value="C:chromatin"/>
    <property type="evidence" value="ECO:0007669"/>
    <property type="project" value="TreeGrafter"/>
</dbReference>
<dbReference type="GO" id="GO:0005634">
    <property type="term" value="C:nucleus"/>
    <property type="evidence" value="ECO:0007669"/>
    <property type="project" value="UniProtKB-SubCell"/>
</dbReference>
<dbReference type="GO" id="GO:0005667">
    <property type="term" value="C:transcription regulator complex"/>
    <property type="evidence" value="ECO:0007669"/>
    <property type="project" value="TreeGrafter"/>
</dbReference>
<dbReference type="GO" id="GO:0000977">
    <property type="term" value="F:RNA polymerase II transcription regulatory region sequence-specific DNA binding"/>
    <property type="evidence" value="ECO:0007669"/>
    <property type="project" value="TreeGrafter"/>
</dbReference>
<dbReference type="GO" id="GO:0030154">
    <property type="term" value="P:cell differentiation"/>
    <property type="evidence" value="ECO:0007669"/>
    <property type="project" value="TreeGrafter"/>
</dbReference>
<dbReference type="GO" id="GO:2000134">
    <property type="term" value="P:negative regulation of G1/S transition of mitotic cell cycle"/>
    <property type="evidence" value="ECO:0007669"/>
    <property type="project" value="TreeGrafter"/>
</dbReference>
<dbReference type="GO" id="GO:0006357">
    <property type="term" value="P:regulation of transcription by RNA polymerase II"/>
    <property type="evidence" value="ECO:0007669"/>
    <property type="project" value="InterPro"/>
</dbReference>
<dbReference type="FunFam" id="1.10.472.10:FF:000030">
    <property type="entry name" value="Retinoblastoma-related protein 1"/>
    <property type="match status" value="1"/>
</dbReference>
<dbReference type="FunFam" id="1.10.472.10:FF:000067">
    <property type="entry name" value="Retinoblastoma-related protein 1"/>
    <property type="match status" value="1"/>
</dbReference>
<dbReference type="FunFam" id="1.10.472.140:FF:000003">
    <property type="entry name" value="Retinoblastoma-related protein 1"/>
    <property type="match status" value="1"/>
</dbReference>
<dbReference type="Gene3D" id="1.10.472.140">
    <property type="match status" value="1"/>
</dbReference>
<dbReference type="Gene3D" id="1.10.472.10">
    <property type="entry name" value="Cyclin-like"/>
    <property type="match status" value="2"/>
</dbReference>
<dbReference type="InterPro" id="IPR036915">
    <property type="entry name" value="Cyclin-like_sf"/>
</dbReference>
<dbReference type="InterPro" id="IPR002720">
    <property type="entry name" value="RB_A"/>
</dbReference>
<dbReference type="InterPro" id="IPR002719">
    <property type="entry name" value="RB_B"/>
</dbReference>
<dbReference type="InterPro" id="IPR028309">
    <property type="entry name" value="RB_fam"/>
</dbReference>
<dbReference type="InterPro" id="IPR024599">
    <property type="entry name" value="RB_N"/>
</dbReference>
<dbReference type="PANTHER" id="PTHR13742:SF17">
    <property type="entry name" value="RE32990P-RELATED"/>
    <property type="match status" value="1"/>
</dbReference>
<dbReference type="PANTHER" id="PTHR13742">
    <property type="entry name" value="RETINOBLASTOMA-ASSOCIATED PROTEIN RB -RELATED"/>
    <property type="match status" value="1"/>
</dbReference>
<dbReference type="Pfam" id="PF11934">
    <property type="entry name" value="DUF3452"/>
    <property type="match status" value="1"/>
</dbReference>
<dbReference type="Pfam" id="PF01858">
    <property type="entry name" value="RB_A"/>
    <property type="match status" value="1"/>
</dbReference>
<dbReference type="Pfam" id="PF01857">
    <property type="entry name" value="RB_B"/>
    <property type="match status" value="1"/>
</dbReference>
<dbReference type="SMART" id="SM01367">
    <property type="entry name" value="DUF3452"/>
    <property type="match status" value="1"/>
</dbReference>
<dbReference type="SMART" id="SM01368">
    <property type="entry name" value="RB_A"/>
    <property type="match status" value="1"/>
</dbReference>
<dbReference type="SUPFAM" id="SSF47954">
    <property type="entry name" value="Cyclin-like"/>
    <property type="match status" value="2"/>
</dbReference>
<organism>
    <name type="scientific">Camellia sinensis</name>
    <name type="common">Tea plant</name>
    <name type="synonym">Thea sinensis</name>
    <dbReference type="NCBI Taxonomy" id="4442"/>
    <lineage>
        <taxon>Eukaryota</taxon>
        <taxon>Viridiplantae</taxon>
        <taxon>Streptophyta</taxon>
        <taxon>Embryophyta</taxon>
        <taxon>Tracheophyta</taxon>
        <taxon>Spermatophyta</taxon>
        <taxon>Magnoliopsida</taxon>
        <taxon>eudicotyledons</taxon>
        <taxon>Gunneridae</taxon>
        <taxon>Pentapetalae</taxon>
        <taxon>asterids</taxon>
        <taxon>Ericales</taxon>
        <taxon>Theaceae</taxon>
        <taxon>Camellia</taxon>
    </lineage>
</organism>
<sequence>MEDHPPKPSIPTADASLSNHGRGGPSLDARFAYFCKTGLSLNENTYTEAMKLFSESKHLLSTTISAIGTGTPEEAERYWFAFVLYSVKRLSEANADDSSQGTGGDGFTLCQILRVAKLNIVDFFKELPQFIVKAGPILSNQYGTDWEKRLEAKELQANFVHLSLLSKYYKRAFREFFLTSDAKVGEQSTAAIASGYVSDYHRFGWLLFLALRTHAFSRFKDLVTCTNGLVAILAILIIHIPVRVRNFNLHDSPRFVMKGSKGVDLLASLCNIYETSEDELRKTMEKANDLIEDILKKNRRSASECRSENLENIATDGLIYFEDLLDDTSLPSSLNILGKDYADATRNKGELDERVFVNEEDSLLGPGSLSGGAMNISGAKRKIDSIASPARTITSPLAPYCSPSASHAKAIPCGSNSKMAATPVTTAMTTAKWLRTIISPLPPKPSPELERFLSSCDSDVTTDVIRRANIILEAIFPSSGLGEECITGGLQCTSLMDSIWAEQRRLEALKLYYRVLQAMCTAEAQILHANNLTSLLTNERFHRCMLACSAELVLATHKTATMLFPAVLERTGITAFDLSKMIGVSFRLKESLPRELKRHLNSLEERLLESMVWEKGSSMYNSLTVARPALSAETNRLCLLAEPMPSLDAIAMHMNITCGSLPCLPSLQKNEILLGQNGDIQSPKRLCTEYRSVLVERNSFTSPVKDRLLTFNTPKSKLPPPALQSAFASPTRPNPGAGGETCAETAINVFFSKIVKLGAFRINGMVERLQLSQEIREIIFRLFQQILSQRTTLFFNRHIDQIILCCFYGVAKISQLSLTFKEIISTIESNPQCKPQVFRSVFVDWSSARRHGKTGQEHVDIITFYNEIFIPAVKPLLVELAPVGTAQKNRNSETINGTDGQCPGSPKISPFPSLPDMSPKKVSAIHNVYVSPLRSSKMDALISNGSKSYYACVGESTHAYQSLSKDLTAINNRLNGNRKLRGTLNFDEVDVGLVSDTLVANSLWLQNGSCASSSGAPVKSERLDS</sequence>
<reference key="1">
    <citation type="submission" date="2006-01" db="EMBL/GenBank/DDBJ databases">
        <title>Studies on cell cycle in Camellia sinensis.</title>
        <authorList>
            <person name="Fukamizu T."/>
            <person name="Shoyama Y."/>
            <person name="Sasaki K."/>
            <person name="Taura F."/>
            <person name="Shoyama Y."/>
            <person name="Morimoto S."/>
        </authorList>
    </citation>
    <scope>NUCLEOTIDE SEQUENCE [MRNA]</scope>
    <source>
        <tissue>Leaf</tissue>
    </source>
</reference>
<proteinExistence type="evidence at transcript level"/>
<protein>
    <recommendedName>
        <fullName>Retinoblastoma-related protein</fullName>
    </recommendedName>
</protein>
<evidence type="ECO:0000250" key="1"/>
<evidence type="ECO:0000256" key="2">
    <source>
        <dbReference type="SAM" id="MobiDB-lite"/>
    </source>
</evidence>
<evidence type="ECO:0000305" key="3"/>
<feature type="chain" id="PRO_0000380230" description="Retinoblastoma-related protein">
    <location>
        <begin position="1"/>
        <end position="1025"/>
    </location>
</feature>
<feature type="region of interest" description="Disordered" evidence="2">
    <location>
        <begin position="1"/>
        <end position="20"/>
    </location>
</feature>
<feature type="region of interest" description="Pocket" evidence="1">
    <location>
        <begin position="422"/>
        <end position="875"/>
    </location>
</feature>
<feature type="region of interest" description="Domain A" evidence="1">
    <location>
        <begin position="422"/>
        <end position="623"/>
    </location>
</feature>
<feature type="region of interest" description="Spacer" evidence="1">
    <location>
        <begin position="624"/>
        <end position="744"/>
    </location>
</feature>
<feature type="region of interest" description="Domain B" evidence="1">
    <location>
        <begin position="745"/>
        <end position="875"/>
    </location>
</feature>
<name>RBR_CAMSI</name>
<gene>
    <name type="primary">pRB</name>
</gene>
<accession>Q2ABE5</accession>
<keyword id="KW-0131">Cell cycle</keyword>
<keyword id="KW-0539">Nucleus</keyword>
<keyword id="KW-0678">Repressor</keyword>
<keyword id="KW-0804">Transcription</keyword>
<keyword id="KW-0805">Transcription regulation</keyword>